<proteinExistence type="inferred from homology"/>
<name>TYPH_YERPY</name>
<evidence type="ECO:0000255" key="1">
    <source>
        <dbReference type="HAMAP-Rule" id="MF_01628"/>
    </source>
</evidence>
<dbReference type="EC" id="2.4.2.4" evidence="1"/>
<dbReference type="EMBL" id="CP000950">
    <property type="protein sequence ID" value="ACA69893.1"/>
    <property type="molecule type" value="Genomic_DNA"/>
</dbReference>
<dbReference type="RefSeq" id="WP_011191687.1">
    <property type="nucleotide sequence ID" value="NZ_CP009792.1"/>
</dbReference>
<dbReference type="SMR" id="B1JL36"/>
<dbReference type="GeneID" id="49787418"/>
<dbReference type="KEGG" id="ypy:YPK_3626"/>
<dbReference type="PATRIC" id="fig|502800.11.peg.4378"/>
<dbReference type="UniPathway" id="UPA00578">
    <property type="reaction ID" value="UER00638"/>
</dbReference>
<dbReference type="GO" id="GO:0005829">
    <property type="term" value="C:cytosol"/>
    <property type="evidence" value="ECO:0007669"/>
    <property type="project" value="TreeGrafter"/>
</dbReference>
<dbReference type="GO" id="GO:0004645">
    <property type="term" value="F:1,4-alpha-oligoglucan phosphorylase activity"/>
    <property type="evidence" value="ECO:0007669"/>
    <property type="project" value="InterPro"/>
</dbReference>
<dbReference type="GO" id="GO:0009032">
    <property type="term" value="F:thymidine phosphorylase activity"/>
    <property type="evidence" value="ECO:0007669"/>
    <property type="project" value="UniProtKB-UniRule"/>
</dbReference>
<dbReference type="GO" id="GO:0006206">
    <property type="term" value="P:pyrimidine nucleobase metabolic process"/>
    <property type="evidence" value="ECO:0007669"/>
    <property type="project" value="InterPro"/>
</dbReference>
<dbReference type="GO" id="GO:0046104">
    <property type="term" value="P:thymidine metabolic process"/>
    <property type="evidence" value="ECO:0007669"/>
    <property type="project" value="UniProtKB-UniRule"/>
</dbReference>
<dbReference type="FunFam" id="3.40.1030.10:FF:000001">
    <property type="entry name" value="Thymidine phosphorylase"/>
    <property type="match status" value="1"/>
</dbReference>
<dbReference type="FunFam" id="3.90.1170.30:FF:000001">
    <property type="entry name" value="Thymidine phosphorylase"/>
    <property type="match status" value="1"/>
</dbReference>
<dbReference type="Gene3D" id="3.40.1030.10">
    <property type="entry name" value="Nucleoside phosphorylase/phosphoribosyltransferase catalytic domain"/>
    <property type="match status" value="1"/>
</dbReference>
<dbReference type="Gene3D" id="3.90.1170.30">
    <property type="entry name" value="Pyrimidine nucleoside phosphorylase-like, C-terminal domain"/>
    <property type="match status" value="1"/>
</dbReference>
<dbReference type="Gene3D" id="1.20.970.10">
    <property type="entry name" value="Transferase, Pyrimidine Nucleoside Phosphorylase, Chain C"/>
    <property type="match status" value="1"/>
</dbReference>
<dbReference type="HAMAP" id="MF_01628">
    <property type="entry name" value="Thymid_phosp"/>
    <property type="match status" value="1"/>
</dbReference>
<dbReference type="InterPro" id="IPR000312">
    <property type="entry name" value="Glycosyl_Trfase_fam3"/>
</dbReference>
<dbReference type="InterPro" id="IPR017459">
    <property type="entry name" value="Glycosyl_Trfase_fam3_N_dom"/>
</dbReference>
<dbReference type="InterPro" id="IPR036320">
    <property type="entry name" value="Glycosyl_Trfase_fam3_N_dom_sf"/>
</dbReference>
<dbReference type="InterPro" id="IPR035902">
    <property type="entry name" value="Nuc_phospho_transferase"/>
</dbReference>
<dbReference type="InterPro" id="IPR036566">
    <property type="entry name" value="PYNP-like_C_sf"/>
</dbReference>
<dbReference type="InterPro" id="IPR013102">
    <property type="entry name" value="PYNP_C"/>
</dbReference>
<dbReference type="InterPro" id="IPR018090">
    <property type="entry name" value="Pyrmidine_PPas_bac/euk"/>
</dbReference>
<dbReference type="InterPro" id="IPR017872">
    <property type="entry name" value="Pyrmidine_PPase_CS"/>
</dbReference>
<dbReference type="InterPro" id="IPR000053">
    <property type="entry name" value="Thymidine/pyrmidine_PPase"/>
</dbReference>
<dbReference type="InterPro" id="IPR013465">
    <property type="entry name" value="Thymidine_Pase"/>
</dbReference>
<dbReference type="NCBIfam" id="NF004490">
    <property type="entry name" value="PRK05820.1"/>
    <property type="match status" value="1"/>
</dbReference>
<dbReference type="NCBIfam" id="TIGR02643">
    <property type="entry name" value="T_phosphoryl"/>
    <property type="match status" value="1"/>
</dbReference>
<dbReference type="NCBIfam" id="TIGR02644">
    <property type="entry name" value="Y_phosphoryl"/>
    <property type="match status" value="1"/>
</dbReference>
<dbReference type="PANTHER" id="PTHR10515">
    <property type="entry name" value="THYMIDINE PHOSPHORYLASE"/>
    <property type="match status" value="1"/>
</dbReference>
<dbReference type="PANTHER" id="PTHR10515:SF0">
    <property type="entry name" value="THYMIDINE PHOSPHORYLASE"/>
    <property type="match status" value="1"/>
</dbReference>
<dbReference type="Pfam" id="PF02885">
    <property type="entry name" value="Glycos_trans_3N"/>
    <property type="match status" value="1"/>
</dbReference>
<dbReference type="Pfam" id="PF00591">
    <property type="entry name" value="Glycos_transf_3"/>
    <property type="match status" value="1"/>
</dbReference>
<dbReference type="Pfam" id="PF07831">
    <property type="entry name" value="PYNP_C"/>
    <property type="match status" value="1"/>
</dbReference>
<dbReference type="PIRSF" id="PIRSF000478">
    <property type="entry name" value="TP_PyNP"/>
    <property type="match status" value="1"/>
</dbReference>
<dbReference type="SMART" id="SM00941">
    <property type="entry name" value="PYNP_C"/>
    <property type="match status" value="1"/>
</dbReference>
<dbReference type="SUPFAM" id="SSF52418">
    <property type="entry name" value="Nucleoside phosphorylase/phosphoribosyltransferase catalytic domain"/>
    <property type="match status" value="1"/>
</dbReference>
<dbReference type="SUPFAM" id="SSF47648">
    <property type="entry name" value="Nucleoside phosphorylase/phosphoribosyltransferase N-terminal domain"/>
    <property type="match status" value="1"/>
</dbReference>
<dbReference type="SUPFAM" id="SSF54680">
    <property type="entry name" value="Pyrimidine nucleoside phosphorylase C-terminal domain"/>
    <property type="match status" value="1"/>
</dbReference>
<dbReference type="PROSITE" id="PS00647">
    <property type="entry name" value="THYMID_PHOSPHORYLASE"/>
    <property type="match status" value="1"/>
</dbReference>
<protein>
    <recommendedName>
        <fullName evidence="1">Thymidine phosphorylase</fullName>
        <ecNumber evidence="1">2.4.2.4</ecNumber>
    </recommendedName>
    <alternativeName>
        <fullName evidence="1">TdRPase</fullName>
    </alternativeName>
</protein>
<accession>B1JL36</accession>
<keyword id="KW-0328">Glycosyltransferase</keyword>
<keyword id="KW-0808">Transferase</keyword>
<organism>
    <name type="scientific">Yersinia pseudotuberculosis serotype O:3 (strain YPIII)</name>
    <dbReference type="NCBI Taxonomy" id="502800"/>
    <lineage>
        <taxon>Bacteria</taxon>
        <taxon>Pseudomonadati</taxon>
        <taxon>Pseudomonadota</taxon>
        <taxon>Gammaproteobacteria</taxon>
        <taxon>Enterobacterales</taxon>
        <taxon>Yersiniaceae</taxon>
        <taxon>Yersinia</taxon>
    </lineage>
</organism>
<sequence>MFLAQEIIRKKRDGQPLSEEEIRFFINGIRDNVVSEGQIAALAMTIYFHDMSMPERVALTMAMRDSGTVLNWKSLNLNGPLVDKHSTGGVGDVTSLMLGPMVAACGGYVPMISGRGLGHTGGTLDKLEAIPGFDIFPDDNAFRKIIQNVGVAIIGQTSSLAPADKRFYATRDITATVDSIPLITASILAKKLAEGLDALVMDVKVGSGAFMPTYSLSADLAQAIVGVANGAGCKTTALLTDMNQVLASSAGNGVEVREAVRFLTGEYRNPRLLEVTMALCVEMLLSGGLAHDEADARAKLQAVLDNGKAAEVFGRMVAAQKGPVDFVERYDSYLPVATLSKPVFAEQTGIITAMDTRALGMAVVALGGGRRRATDPIDYSVGLTEMARLGTRVDGQQPLAVIHANNEDDWQQAAEAVRAAITLGNNAPEETPVIYRRITE</sequence>
<comment type="function">
    <text evidence="1">The enzymes which catalyze the reversible phosphorolysis of pyrimidine nucleosides are involved in the degradation of these compounds and in their utilization as carbon and energy sources, or in the rescue of pyrimidine bases for nucleotide synthesis.</text>
</comment>
<comment type="catalytic activity">
    <reaction evidence="1">
        <text>thymidine + phosphate = 2-deoxy-alpha-D-ribose 1-phosphate + thymine</text>
        <dbReference type="Rhea" id="RHEA:16037"/>
        <dbReference type="ChEBI" id="CHEBI:17748"/>
        <dbReference type="ChEBI" id="CHEBI:17821"/>
        <dbReference type="ChEBI" id="CHEBI:43474"/>
        <dbReference type="ChEBI" id="CHEBI:57259"/>
        <dbReference type="EC" id="2.4.2.4"/>
    </reaction>
</comment>
<comment type="pathway">
    <text evidence="1">Pyrimidine metabolism; dTMP biosynthesis via salvage pathway; dTMP from thymine: step 1/2.</text>
</comment>
<comment type="subunit">
    <text evidence="1">Homodimer.</text>
</comment>
<comment type="similarity">
    <text evidence="1">Belongs to the thymidine/pyrimidine-nucleoside phosphorylase family.</text>
</comment>
<feature type="chain" id="PRO_1000186278" description="Thymidine phosphorylase">
    <location>
        <begin position="1"/>
        <end position="440"/>
    </location>
</feature>
<reference key="1">
    <citation type="submission" date="2008-02" db="EMBL/GenBank/DDBJ databases">
        <title>Complete sequence of Yersinia pseudotuberculosis YPIII.</title>
        <authorList>
            <consortium name="US DOE Joint Genome Institute"/>
            <person name="Copeland A."/>
            <person name="Lucas S."/>
            <person name="Lapidus A."/>
            <person name="Glavina del Rio T."/>
            <person name="Dalin E."/>
            <person name="Tice H."/>
            <person name="Bruce D."/>
            <person name="Goodwin L."/>
            <person name="Pitluck S."/>
            <person name="Munk A.C."/>
            <person name="Brettin T."/>
            <person name="Detter J.C."/>
            <person name="Han C."/>
            <person name="Tapia R."/>
            <person name="Schmutz J."/>
            <person name="Larimer F."/>
            <person name="Land M."/>
            <person name="Hauser L."/>
            <person name="Challacombe J.F."/>
            <person name="Green L."/>
            <person name="Lindler L.E."/>
            <person name="Nikolich M.P."/>
            <person name="Richardson P."/>
        </authorList>
    </citation>
    <scope>NUCLEOTIDE SEQUENCE [LARGE SCALE GENOMIC DNA]</scope>
    <source>
        <strain>YPIII</strain>
    </source>
</reference>
<gene>
    <name evidence="1" type="primary">deoA</name>
    <name type="ordered locus">YPK_3626</name>
</gene>